<name>SPLA1_STAAU</name>
<sequence>MNKNVMIKGLTALTILTSLGFAENISDQPHSIAKAEKNIKEVTDATKAPYNSVVAFAGGTGVVVGKNTIVTNKHIAKSNDIFKNRVSAHHSSKGKGGGNYDVKDIVEYPGKEDLAIVHVHETSTEGLNFNKNVSYTKFAEGAKMKDRISVIGYPKGAQTKYKMFESTGTINHINGTFMEFDAYAQPGNSGSPVLNSKNELVGILYAGSGKDESEKNFGVYFTPQLKEFIQNNIEK</sequence>
<organism>
    <name type="scientific">Staphylococcus aureus</name>
    <dbReference type="NCBI Taxonomy" id="1280"/>
    <lineage>
        <taxon>Bacteria</taxon>
        <taxon>Bacillati</taxon>
        <taxon>Bacillota</taxon>
        <taxon>Bacilli</taxon>
        <taxon>Bacillales</taxon>
        <taxon>Staphylococcaceae</taxon>
        <taxon>Staphylococcus</taxon>
    </lineage>
</organism>
<proteinExistence type="inferred from homology"/>
<protein>
    <recommendedName>
        <fullName>Serine protease SplA</fullName>
        <ecNumber>3.4.21.-</ecNumber>
    </recommendedName>
</protein>
<accession>Q9FD08</accession>
<evidence type="ECO:0000250" key="1"/>
<evidence type="ECO:0000305" key="2"/>
<dbReference type="EC" id="3.4.21.-"/>
<dbReference type="EMBL" id="AF295600">
    <property type="protein sequence ID" value="AAG02238.1"/>
    <property type="molecule type" value="Genomic_DNA"/>
</dbReference>
<dbReference type="RefSeq" id="WP_001039421.1">
    <property type="nucleotide sequence ID" value="NZ_LS483302.1"/>
</dbReference>
<dbReference type="SMR" id="Q9FD08"/>
<dbReference type="MEROPS" id="S01.503"/>
<dbReference type="GO" id="GO:0005576">
    <property type="term" value="C:extracellular region"/>
    <property type="evidence" value="ECO:0007669"/>
    <property type="project" value="UniProtKB-SubCell"/>
</dbReference>
<dbReference type="GO" id="GO:0004252">
    <property type="term" value="F:serine-type endopeptidase activity"/>
    <property type="evidence" value="ECO:0007669"/>
    <property type="project" value="InterPro"/>
</dbReference>
<dbReference type="GO" id="GO:0006508">
    <property type="term" value="P:proteolysis"/>
    <property type="evidence" value="ECO:0007669"/>
    <property type="project" value="UniProtKB-KW"/>
</dbReference>
<dbReference type="Gene3D" id="2.40.10.10">
    <property type="entry name" value="Trypsin-like serine proteases"/>
    <property type="match status" value="2"/>
</dbReference>
<dbReference type="InterPro" id="IPR009003">
    <property type="entry name" value="Peptidase_S1_PA"/>
</dbReference>
<dbReference type="InterPro" id="IPR043504">
    <property type="entry name" value="Peptidase_S1_PA_chymotrypsin"/>
</dbReference>
<dbReference type="InterPro" id="IPR008256">
    <property type="entry name" value="Peptidase_S1B"/>
</dbReference>
<dbReference type="InterPro" id="IPR008353">
    <property type="entry name" value="Peptidase_S1B_tx"/>
</dbReference>
<dbReference type="InterPro" id="IPR001254">
    <property type="entry name" value="Trypsin_dom"/>
</dbReference>
<dbReference type="InterPro" id="IPR028301">
    <property type="entry name" value="V8_his_AS"/>
</dbReference>
<dbReference type="PANTHER" id="PTHR43019:SF23">
    <property type="entry name" value="PROTEASE DO-LIKE 5, CHLOROPLASTIC"/>
    <property type="match status" value="1"/>
</dbReference>
<dbReference type="PANTHER" id="PTHR43019">
    <property type="entry name" value="SERINE ENDOPROTEASE DEGS"/>
    <property type="match status" value="1"/>
</dbReference>
<dbReference type="Pfam" id="PF00089">
    <property type="entry name" value="Trypsin"/>
    <property type="match status" value="1"/>
</dbReference>
<dbReference type="PRINTS" id="PR01774">
    <property type="entry name" value="EXFOLTOXIN"/>
</dbReference>
<dbReference type="PRINTS" id="PR00839">
    <property type="entry name" value="V8PROTEASE"/>
</dbReference>
<dbReference type="SUPFAM" id="SSF50494">
    <property type="entry name" value="Trypsin-like serine proteases"/>
    <property type="match status" value="1"/>
</dbReference>
<dbReference type="PROSITE" id="PS00672">
    <property type="entry name" value="V8_HIS"/>
    <property type="match status" value="1"/>
</dbReference>
<gene>
    <name type="primary">splA</name>
</gene>
<comment type="subcellular location">
    <subcellularLocation>
        <location evidence="1">Secreted</location>
    </subcellularLocation>
</comment>
<comment type="similarity">
    <text evidence="2">Belongs to the peptidase S1B family.</text>
</comment>
<feature type="signal peptide" evidence="1">
    <location>
        <begin position="1"/>
        <end position="35"/>
    </location>
</feature>
<feature type="chain" id="PRO_0000359525" description="Serine protease SplA">
    <location>
        <begin position="36"/>
        <end position="235"/>
    </location>
</feature>
<feature type="active site" description="Charge relay system" evidence="1">
    <location>
        <position position="74"/>
    </location>
</feature>
<feature type="active site" description="Charge relay system" evidence="1">
    <location>
        <position position="113"/>
    </location>
</feature>
<feature type="active site" description="Charge relay system" evidence="1">
    <location>
        <position position="189"/>
    </location>
</feature>
<keyword id="KW-0378">Hydrolase</keyword>
<keyword id="KW-0645">Protease</keyword>
<keyword id="KW-0964">Secreted</keyword>
<keyword id="KW-0720">Serine protease</keyword>
<keyword id="KW-0732">Signal</keyword>
<reference key="1">
    <citation type="submission" date="2000-08" db="EMBL/GenBank/DDBJ databases">
        <title>Cloning and expression of two genes from a novel Staphylococcus aureus operon encoding serine protease like exoproteins.</title>
        <authorList>
            <person name="Nair S.P."/>
            <person name="Williams R.J."/>
        </authorList>
    </citation>
    <scope>NUCLEOTIDE SEQUENCE [GENOMIC DNA]</scope>
    <source>
        <strain>FRI326</strain>
    </source>
</reference>